<evidence type="ECO:0000255" key="1">
    <source>
        <dbReference type="HAMAP-Rule" id="MF_01320"/>
    </source>
</evidence>
<evidence type="ECO:0000256" key="2">
    <source>
        <dbReference type="SAM" id="MobiDB-lite"/>
    </source>
</evidence>
<evidence type="ECO:0000305" key="3"/>
<reference key="1">
    <citation type="journal article" date="2003" name="Science">
        <title>Genome of Geobacter sulfurreducens: metal reduction in subsurface environments.</title>
        <authorList>
            <person name="Methe B.A."/>
            <person name="Nelson K.E."/>
            <person name="Eisen J.A."/>
            <person name="Paulsen I.T."/>
            <person name="Nelson W.C."/>
            <person name="Heidelberg J.F."/>
            <person name="Wu D."/>
            <person name="Wu M."/>
            <person name="Ward N.L."/>
            <person name="Beanan M.J."/>
            <person name="Dodson R.J."/>
            <person name="Madupu R."/>
            <person name="Brinkac L.M."/>
            <person name="Daugherty S.C."/>
            <person name="DeBoy R.T."/>
            <person name="Durkin A.S."/>
            <person name="Gwinn M.L."/>
            <person name="Kolonay J.F."/>
            <person name="Sullivan S.A."/>
            <person name="Haft D.H."/>
            <person name="Selengut J."/>
            <person name="Davidsen T.M."/>
            <person name="Zafar N."/>
            <person name="White O."/>
            <person name="Tran B."/>
            <person name="Romero C."/>
            <person name="Forberger H.A."/>
            <person name="Weidman J.F."/>
            <person name="Khouri H.M."/>
            <person name="Feldblyum T.V."/>
            <person name="Utterback T.R."/>
            <person name="Van Aken S.E."/>
            <person name="Lovley D.R."/>
            <person name="Fraser C.M."/>
        </authorList>
    </citation>
    <scope>NUCLEOTIDE SEQUENCE [LARGE SCALE GENOMIC DNA]</scope>
    <source>
        <strain>ATCC 51573 / DSM 12127 / PCA</strain>
    </source>
</reference>
<protein>
    <recommendedName>
        <fullName evidence="1">Large ribosomal subunit protein uL2</fullName>
    </recommendedName>
    <alternativeName>
        <fullName evidence="3">50S ribosomal protein L2</fullName>
    </alternativeName>
</protein>
<sequence length="274" mass="29829">MAIKTYKPTSAGRRHQTCSAFDEITTSTPEKSLIVTIKKTGGRNSFGRITARHIGGGHKKKYRIIDFRRNKVEVPAKVASIEYDPNRSARIALLHYADGAKRYILAPLDLKVGDSIVASSNADIKPGNALPLRAIPLGTIIHNIELKIGKGGQLARSAGTFAQLMAKEGKYAQVKLPSGEVRMVLLDCMATIGQVGNIDHENVSIGKAGRSRWLGRRPKVRGVAMNPVDHPHGGGEGRTSGGRHPVTPWGIPTKGYKTRKNKTSTRFIVKKRSK</sequence>
<organism>
    <name type="scientific">Geobacter sulfurreducens (strain ATCC 51573 / DSM 12127 / PCA)</name>
    <dbReference type="NCBI Taxonomy" id="243231"/>
    <lineage>
        <taxon>Bacteria</taxon>
        <taxon>Pseudomonadati</taxon>
        <taxon>Thermodesulfobacteriota</taxon>
        <taxon>Desulfuromonadia</taxon>
        <taxon>Geobacterales</taxon>
        <taxon>Geobacteraceae</taxon>
        <taxon>Geobacter</taxon>
    </lineage>
</organism>
<comment type="function">
    <text evidence="1">One of the primary rRNA binding proteins. Required for association of the 30S and 50S subunits to form the 70S ribosome, for tRNA binding and peptide bond formation. It has been suggested to have peptidyltransferase activity; this is somewhat controversial. Makes several contacts with the 16S rRNA in the 70S ribosome.</text>
</comment>
<comment type="subunit">
    <text evidence="1">Part of the 50S ribosomal subunit. Forms a bridge to the 30S subunit in the 70S ribosome.</text>
</comment>
<comment type="similarity">
    <text evidence="1">Belongs to the universal ribosomal protein uL2 family.</text>
</comment>
<feature type="chain" id="PRO_0000129564" description="Large ribosomal subunit protein uL2">
    <location>
        <begin position="1"/>
        <end position="274"/>
    </location>
</feature>
<feature type="region of interest" description="Disordered" evidence="2">
    <location>
        <begin position="223"/>
        <end position="257"/>
    </location>
</feature>
<accession>P60401</accession>
<name>RL2_GEOSL</name>
<keyword id="KW-1185">Reference proteome</keyword>
<keyword id="KW-0687">Ribonucleoprotein</keyword>
<keyword id="KW-0689">Ribosomal protein</keyword>
<keyword id="KW-0694">RNA-binding</keyword>
<keyword id="KW-0699">rRNA-binding</keyword>
<proteinExistence type="inferred from homology"/>
<gene>
    <name evidence="1" type="primary">rplB</name>
    <name type="ordered locus">GSU2854</name>
</gene>
<dbReference type="EMBL" id="AE017180">
    <property type="protein sequence ID" value="AAR36247.1"/>
    <property type="molecule type" value="Genomic_DNA"/>
</dbReference>
<dbReference type="RefSeq" id="NP_953897.1">
    <property type="nucleotide sequence ID" value="NC_002939.5"/>
</dbReference>
<dbReference type="RefSeq" id="WP_010943483.1">
    <property type="nucleotide sequence ID" value="NC_002939.5"/>
</dbReference>
<dbReference type="SMR" id="P60401"/>
<dbReference type="FunCoup" id="P60401">
    <property type="interactions" value="774"/>
</dbReference>
<dbReference type="STRING" id="243231.GSU2854"/>
<dbReference type="EnsemblBacteria" id="AAR36247">
    <property type="protein sequence ID" value="AAR36247"/>
    <property type="gene ID" value="GSU2854"/>
</dbReference>
<dbReference type="KEGG" id="gsu:GSU2854"/>
<dbReference type="PATRIC" id="fig|243231.5.peg.2880"/>
<dbReference type="eggNOG" id="COG0090">
    <property type="taxonomic scope" value="Bacteria"/>
</dbReference>
<dbReference type="HOGENOM" id="CLU_036235_2_1_7"/>
<dbReference type="InParanoid" id="P60401"/>
<dbReference type="OrthoDB" id="9778722at2"/>
<dbReference type="Proteomes" id="UP000000577">
    <property type="component" value="Chromosome"/>
</dbReference>
<dbReference type="GO" id="GO:0022625">
    <property type="term" value="C:cytosolic large ribosomal subunit"/>
    <property type="evidence" value="ECO:0000318"/>
    <property type="project" value="GO_Central"/>
</dbReference>
<dbReference type="GO" id="GO:0003723">
    <property type="term" value="F:RNA binding"/>
    <property type="evidence" value="ECO:0000318"/>
    <property type="project" value="GO_Central"/>
</dbReference>
<dbReference type="GO" id="GO:0019843">
    <property type="term" value="F:rRNA binding"/>
    <property type="evidence" value="ECO:0007669"/>
    <property type="project" value="UniProtKB-UniRule"/>
</dbReference>
<dbReference type="GO" id="GO:0003735">
    <property type="term" value="F:structural constituent of ribosome"/>
    <property type="evidence" value="ECO:0000318"/>
    <property type="project" value="GO_Central"/>
</dbReference>
<dbReference type="GO" id="GO:0016740">
    <property type="term" value="F:transferase activity"/>
    <property type="evidence" value="ECO:0007669"/>
    <property type="project" value="InterPro"/>
</dbReference>
<dbReference type="GO" id="GO:0002181">
    <property type="term" value="P:cytoplasmic translation"/>
    <property type="evidence" value="ECO:0000318"/>
    <property type="project" value="GO_Central"/>
</dbReference>
<dbReference type="FunFam" id="2.30.30.30:FF:000001">
    <property type="entry name" value="50S ribosomal protein L2"/>
    <property type="match status" value="1"/>
</dbReference>
<dbReference type="FunFam" id="2.40.50.140:FF:000003">
    <property type="entry name" value="50S ribosomal protein L2"/>
    <property type="match status" value="1"/>
</dbReference>
<dbReference type="FunFam" id="4.10.950.10:FF:000001">
    <property type="entry name" value="50S ribosomal protein L2"/>
    <property type="match status" value="1"/>
</dbReference>
<dbReference type="Gene3D" id="2.30.30.30">
    <property type="match status" value="1"/>
</dbReference>
<dbReference type="Gene3D" id="2.40.50.140">
    <property type="entry name" value="Nucleic acid-binding proteins"/>
    <property type="match status" value="1"/>
</dbReference>
<dbReference type="Gene3D" id="4.10.950.10">
    <property type="entry name" value="Ribosomal protein L2, domain 3"/>
    <property type="match status" value="1"/>
</dbReference>
<dbReference type="HAMAP" id="MF_01320_B">
    <property type="entry name" value="Ribosomal_uL2_B"/>
    <property type="match status" value="1"/>
</dbReference>
<dbReference type="InterPro" id="IPR012340">
    <property type="entry name" value="NA-bd_OB-fold"/>
</dbReference>
<dbReference type="InterPro" id="IPR014722">
    <property type="entry name" value="Rib_uL2_dom2"/>
</dbReference>
<dbReference type="InterPro" id="IPR002171">
    <property type="entry name" value="Ribosomal_uL2"/>
</dbReference>
<dbReference type="InterPro" id="IPR005880">
    <property type="entry name" value="Ribosomal_uL2_bac/org-type"/>
</dbReference>
<dbReference type="InterPro" id="IPR022669">
    <property type="entry name" value="Ribosomal_uL2_C"/>
</dbReference>
<dbReference type="InterPro" id="IPR022671">
    <property type="entry name" value="Ribosomal_uL2_CS"/>
</dbReference>
<dbReference type="InterPro" id="IPR014726">
    <property type="entry name" value="Ribosomal_uL2_dom3"/>
</dbReference>
<dbReference type="InterPro" id="IPR022666">
    <property type="entry name" value="Ribosomal_uL2_RNA-bd_dom"/>
</dbReference>
<dbReference type="InterPro" id="IPR008991">
    <property type="entry name" value="Translation_prot_SH3-like_sf"/>
</dbReference>
<dbReference type="NCBIfam" id="TIGR01171">
    <property type="entry name" value="rplB_bact"/>
    <property type="match status" value="1"/>
</dbReference>
<dbReference type="PANTHER" id="PTHR13691:SF5">
    <property type="entry name" value="LARGE RIBOSOMAL SUBUNIT PROTEIN UL2M"/>
    <property type="match status" value="1"/>
</dbReference>
<dbReference type="PANTHER" id="PTHR13691">
    <property type="entry name" value="RIBOSOMAL PROTEIN L2"/>
    <property type="match status" value="1"/>
</dbReference>
<dbReference type="Pfam" id="PF00181">
    <property type="entry name" value="Ribosomal_L2"/>
    <property type="match status" value="1"/>
</dbReference>
<dbReference type="Pfam" id="PF03947">
    <property type="entry name" value="Ribosomal_L2_C"/>
    <property type="match status" value="1"/>
</dbReference>
<dbReference type="PIRSF" id="PIRSF002158">
    <property type="entry name" value="Ribosomal_L2"/>
    <property type="match status" value="1"/>
</dbReference>
<dbReference type="SMART" id="SM01383">
    <property type="entry name" value="Ribosomal_L2"/>
    <property type="match status" value="1"/>
</dbReference>
<dbReference type="SMART" id="SM01382">
    <property type="entry name" value="Ribosomal_L2_C"/>
    <property type="match status" value="1"/>
</dbReference>
<dbReference type="SUPFAM" id="SSF50249">
    <property type="entry name" value="Nucleic acid-binding proteins"/>
    <property type="match status" value="1"/>
</dbReference>
<dbReference type="SUPFAM" id="SSF50104">
    <property type="entry name" value="Translation proteins SH3-like domain"/>
    <property type="match status" value="1"/>
</dbReference>
<dbReference type="PROSITE" id="PS00467">
    <property type="entry name" value="RIBOSOMAL_L2"/>
    <property type="match status" value="1"/>
</dbReference>